<accession>A7NEM1</accession>
<feature type="chain" id="PRO_1000015831" description="Glutamyl-tRNA(Gln) amidotransferase subunit A">
    <location>
        <begin position="1"/>
        <end position="481"/>
    </location>
</feature>
<feature type="active site" description="Charge relay system" evidence="1">
    <location>
        <position position="74"/>
    </location>
</feature>
<feature type="active site" description="Charge relay system" evidence="1">
    <location>
        <position position="149"/>
    </location>
</feature>
<feature type="active site" description="Acyl-ester intermediate" evidence="1">
    <location>
        <position position="173"/>
    </location>
</feature>
<proteinExistence type="inferred from homology"/>
<name>GATA_FRATF</name>
<reference key="1">
    <citation type="journal article" date="2009" name="PLoS ONE">
        <title>Complete genome sequence of Francisella tularensis subspecies holarctica FTNF002-00.</title>
        <authorList>
            <person name="Barabote R.D."/>
            <person name="Xie G."/>
            <person name="Brettin T.S."/>
            <person name="Hinrichs S.H."/>
            <person name="Fey P.D."/>
            <person name="Jay J.J."/>
            <person name="Engle J.L."/>
            <person name="Godbole S.D."/>
            <person name="Noronha J.M."/>
            <person name="Scheuermann R.H."/>
            <person name="Zhou L.W."/>
            <person name="Lion C."/>
            <person name="Dempsey M.P."/>
        </authorList>
    </citation>
    <scope>NUCLEOTIDE SEQUENCE [LARGE SCALE GENOMIC DNA]</scope>
    <source>
        <strain>FTNF002-00 / FTA</strain>
    </source>
</reference>
<dbReference type="EC" id="6.3.5.7" evidence="1"/>
<dbReference type="EMBL" id="CP000803">
    <property type="protein sequence ID" value="ABU62424.1"/>
    <property type="molecule type" value="Genomic_DNA"/>
</dbReference>
<dbReference type="RefSeq" id="WP_003017412.1">
    <property type="nucleotide sequence ID" value="NC_009749.1"/>
</dbReference>
<dbReference type="SMR" id="A7NEM1"/>
<dbReference type="KEGG" id="fta:FTA_1949"/>
<dbReference type="HOGENOM" id="CLU_009600_0_3_6"/>
<dbReference type="GO" id="GO:0030956">
    <property type="term" value="C:glutamyl-tRNA(Gln) amidotransferase complex"/>
    <property type="evidence" value="ECO:0007669"/>
    <property type="project" value="InterPro"/>
</dbReference>
<dbReference type="GO" id="GO:0005524">
    <property type="term" value="F:ATP binding"/>
    <property type="evidence" value="ECO:0007669"/>
    <property type="project" value="UniProtKB-KW"/>
</dbReference>
<dbReference type="GO" id="GO:0050567">
    <property type="term" value="F:glutaminyl-tRNA synthase (glutamine-hydrolyzing) activity"/>
    <property type="evidence" value="ECO:0007669"/>
    <property type="project" value="UniProtKB-UniRule"/>
</dbReference>
<dbReference type="GO" id="GO:0006412">
    <property type="term" value="P:translation"/>
    <property type="evidence" value="ECO:0007669"/>
    <property type="project" value="UniProtKB-UniRule"/>
</dbReference>
<dbReference type="Gene3D" id="3.90.1300.10">
    <property type="entry name" value="Amidase signature (AS) domain"/>
    <property type="match status" value="1"/>
</dbReference>
<dbReference type="HAMAP" id="MF_00120">
    <property type="entry name" value="GatA"/>
    <property type="match status" value="1"/>
</dbReference>
<dbReference type="InterPro" id="IPR000120">
    <property type="entry name" value="Amidase"/>
</dbReference>
<dbReference type="InterPro" id="IPR020556">
    <property type="entry name" value="Amidase_CS"/>
</dbReference>
<dbReference type="InterPro" id="IPR023631">
    <property type="entry name" value="Amidase_dom"/>
</dbReference>
<dbReference type="InterPro" id="IPR036928">
    <property type="entry name" value="AS_sf"/>
</dbReference>
<dbReference type="InterPro" id="IPR004412">
    <property type="entry name" value="GatA"/>
</dbReference>
<dbReference type="NCBIfam" id="TIGR00132">
    <property type="entry name" value="gatA"/>
    <property type="match status" value="1"/>
</dbReference>
<dbReference type="PANTHER" id="PTHR11895:SF151">
    <property type="entry name" value="GLUTAMYL-TRNA(GLN) AMIDOTRANSFERASE SUBUNIT A"/>
    <property type="match status" value="1"/>
</dbReference>
<dbReference type="PANTHER" id="PTHR11895">
    <property type="entry name" value="TRANSAMIDASE"/>
    <property type="match status" value="1"/>
</dbReference>
<dbReference type="Pfam" id="PF01425">
    <property type="entry name" value="Amidase"/>
    <property type="match status" value="1"/>
</dbReference>
<dbReference type="SUPFAM" id="SSF75304">
    <property type="entry name" value="Amidase signature (AS) enzymes"/>
    <property type="match status" value="1"/>
</dbReference>
<dbReference type="PROSITE" id="PS00571">
    <property type="entry name" value="AMIDASES"/>
    <property type="match status" value="1"/>
</dbReference>
<protein>
    <recommendedName>
        <fullName evidence="1">Glutamyl-tRNA(Gln) amidotransferase subunit A</fullName>
        <shortName evidence="1">Glu-ADT subunit A</shortName>
        <ecNumber evidence="1">6.3.5.7</ecNumber>
    </recommendedName>
</protein>
<comment type="function">
    <text evidence="1">Allows the formation of correctly charged Gln-tRNA(Gln) through the transamidation of misacylated Glu-tRNA(Gln) in organisms which lack glutaminyl-tRNA synthetase. The reaction takes place in the presence of glutamine and ATP through an activated gamma-phospho-Glu-tRNA(Gln).</text>
</comment>
<comment type="catalytic activity">
    <reaction evidence="1">
        <text>L-glutamyl-tRNA(Gln) + L-glutamine + ATP + H2O = L-glutaminyl-tRNA(Gln) + L-glutamate + ADP + phosphate + H(+)</text>
        <dbReference type="Rhea" id="RHEA:17521"/>
        <dbReference type="Rhea" id="RHEA-COMP:9681"/>
        <dbReference type="Rhea" id="RHEA-COMP:9684"/>
        <dbReference type="ChEBI" id="CHEBI:15377"/>
        <dbReference type="ChEBI" id="CHEBI:15378"/>
        <dbReference type="ChEBI" id="CHEBI:29985"/>
        <dbReference type="ChEBI" id="CHEBI:30616"/>
        <dbReference type="ChEBI" id="CHEBI:43474"/>
        <dbReference type="ChEBI" id="CHEBI:58359"/>
        <dbReference type="ChEBI" id="CHEBI:78520"/>
        <dbReference type="ChEBI" id="CHEBI:78521"/>
        <dbReference type="ChEBI" id="CHEBI:456216"/>
        <dbReference type="EC" id="6.3.5.7"/>
    </reaction>
</comment>
<comment type="subunit">
    <text evidence="1">Heterotrimer of A, B and C subunits.</text>
</comment>
<comment type="similarity">
    <text evidence="1">Belongs to the amidase family. GatA subfamily.</text>
</comment>
<gene>
    <name evidence="1" type="primary">gatA</name>
    <name type="ordered locus">FTA_1949</name>
</gene>
<sequence length="481" mass="52396">MSYIKKLRARLDSGEISAVELTKEYLAKIKEQDKRINSIITLCEAEALKEAEDADAIISAGKQGLLTGIPILHKDLFCTKGIRTTAASKMLDNFVAPYDSTVTKNCKDQGMVTLGKLNMDEFAMGSTNEYSYYGAVSNPWDLERVPGGSSGGSAAAVAAGFAPISTGSDTGGSVRQPASFCGLTAMKPSYGSTSRFGMVAFASSFDQAGIFGHYAEDVAIMLDAIAGECEFDSTCVGVKQNHFTQDLEKDISSKVIGVDESLIKDLPAQIQEAVSKTLDNFKKLGAEIKSVKVPDLKEALSTYYIITPAEAAANLARYDGIRYGYRNPEARDLDELYRKSRTDGFGAEVKRRIMIGNYVLASSQYDSYYNKAQQLRKVMTDQINQIFTQVDAIFMPASPSEAFKKGDKLDPVSAYLSDIYTIPANISGLPAIAFPIGFANNLPVGGQLMAKAFNDNILTQMVVQYQKHYGIEEFILQQARI</sequence>
<keyword id="KW-0067">ATP-binding</keyword>
<keyword id="KW-0436">Ligase</keyword>
<keyword id="KW-0547">Nucleotide-binding</keyword>
<keyword id="KW-0648">Protein biosynthesis</keyword>
<organism>
    <name type="scientific">Francisella tularensis subsp. holarctica (strain FTNF002-00 / FTA)</name>
    <dbReference type="NCBI Taxonomy" id="458234"/>
    <lineage>
        <taxon>Bacteria</taxon>
        <taxon>Pseudomonadati</taxon>
        <taxon>Pseudomonadota</taxon>
        <taxon>Gammaproteobacteria</taxon>
        <taxon>Thiotrichales</taxon>
        <taxon>Francisellaceae</taxon>
        <taxon>Francisella</taxon>
    </lineage>
</organism>
<evidence type="ECO:0000255" key="1">
    <source>
        <dbReference type="HAMAP-Rule" id="MF_00120"/>
    </source>
</evidence>